<name>VM2HA_PROFL</name>
<accession>P14530</accession>
<accession>P80949</accession>
<accession>Q90W25</accession>
<organism>
    <name type="scientific">Protobothrops flavoviridis</name>
    <name type="common">Habu</name>
    <name type="synonym">Trimeresurus flavoviridis</name>
    <dbReference type="NCBI Taxonomy" id="88087"/>
    <lineage>
        <taxon>Eukaryota</taxon>
        <taxon>Metazoa</taxon>
        <taxon>Chordata</taxon>
        <taxon>Craniata</taxon>
        <taxon>Vertebrata</taxon>
        <taxon>Euteleostomi</taxon>
        <taxon>Lepidosauria</taxon>
        <taxon>Squamata</taxon>
        <taxon>Bifurcata</taxon>
        <taxon>Unidentata</taxon>
        <taxon>Episquamata</taxon>
        <taxon>Toxicofera</taxon>
        <taxon>Serpentes</taxon>
        <taxon>Colubroidea</taxon>
        <taxon>Viperidae</taxon>
        <taxon>Crotalinae</taxon>
        <taxon>Protobothrops</taxon>
    </lineage>
</organism>
<feature type="signal peptide" evidence="3">
    <location>
        <begin position="1"/>
        <end position="20"/>
    </location>
</feature>
<feature type="propeptide" id="PRO_0000029013" evidence="14">
    <location>
        <begin position="21"/>
        <end position="190"/>
    </location>
</feature>
<feature type="chain" id="PRO_0000029014" description="Snake venom metalloproteinase HR2a" evidence="7">
    <location>
        <begin position="191"/>
        <end position="392"/>
    </location>
</feature>
<feature type="propeptide" id="PRO_0000029015" evidence="14">
    <location>
        <begin position="393"/>
        <end position="410"/>
    </location>
</feature>
<feature type="chain" id="PRO_0000029016" description="Disintegrin flavostatin" evidence="9">
    <location>
        <begin position="411"/>
        <end position="478"/>
    </location>
</feature>
<feature type="domain" description="Peptidase M12B" evidence="5">
    <location>
        <begin position="197"/>
        <end position="392"/>
    </location>
</feature>
<feature type="domain" description="Disintegrin" evidence="4">
    <location>
        <begin position="400"/>
        <end position="478"/>
    </location>
</feature>
<feature type="region of interest" description="Disordered" evidence="6">
    <location>
        <begin position="459"/>
        <end position="478"/>
    </location>
</feature>
<feature type="short sequence motif" description="Cell attachment site">
    <location>
        <begin position="459"/>
        <end position="461"/>
    </location>
</feature>
<feature type="compositionally biased region" description="Polar residues" evidence="6">
    <location>
        <begin position="468"/>
        <end position="478"/>
    </location>
</feature>
<feature type="active site" evidence="5">
    <location>
        <position position="334"/>
    </location>
</feature>
<feature type="binding site" evidence="1">
    <location>
        <position position="200"/>
    </location>
    <ligand>
        <name>Ca(2+)</name>
        <dbReference type="ChEBI" id="CHEBI:29108"/>
    </ligand>
</feature>
<feature type="binding site" evidence="1">
    <location>
        <position position="284"/>
    </location>
    <ligand>
        <name>Ca(2+)</name>
        <dbReference type="ChEBI" id="CHEBI:29108"/>
    </ligand>
</feature>
<feature type="binding site" evidence="5">
    <location>
        <position position="333"/>
    </location>
    <ligand>
        <name>Zn(2+)</name>
        <dbReference type="ChEBI" id="CHEBI:29105"/>
        <note>catalytic</note>
    </ligand>
</feature>
<feature type="binding site" evidence="5">
    <location>
        <position position="337"/>
    </location>
    <ligand>
        <name>Zn(2+)</name>
        <dbReference type="ChEBI" id="CHEBI:29105"/>
        <note>catalytic</note>
    </ligand>
</feature>
<feature type="binding site" evidence="5">
    <location>
        <position position="343"/>
    </location>
    <ligand>
        <name>Zn(2+)</name>
        <dbReference type="ChEBI" id="CHEBI:29105"/>
        <note>catalytic</note>
    </ligand>
</feature>
<feature type="binding site" evidence="1">
    <location>
        <position position="387"/>
    </location>
    <ligand>
        <name>Ca(2+)</name>
        <dbReference type="ChEBI" id="CHEBI:29108"/>
    </ligand>
</feature>
<feature type="binding site" evidence="1">
    <location>
        <position position="390"/>
    </location>
    <ligand>
        <name>Ca(2+)</name>
        <dbReference type="ChEBI" id="CHEBI:29108"/>
    </ligand>
</feature>
<feature type="site" description="Not glycosylated" evidence="7">
    <location>
        <position position="293"/>
    </location>
</feature>
<feature type="modified residue" description="Pyrrolidone carboxylic acid" evidence="7 8">
    <location>
        <position position="191"/>
    </location>
</feature>
<feature type="disulfide bond" evidence="7 8">
    <location>
        <begin position="308"/>
        <end position="387"/>
    </location>
</feature>
<feature type="disulfide bond" evidence="7 8">
    <location>
        <begin position="349"/>
        <end position="371"/>
    </location>
</feature>
<feature type="disulfide bond" evidence="7 8">
    <location>
        <begin position="351"/>
        <end position="354"/>
    </location>
</feature>
<feature type="disulfide bond" evidence="2">
    <location>
        <begin position="414"/>
        <end position="429"/>
    </location>
</feature>
<feature type="disulfide bond" evidence="2">
    <location>
        <begin position="416"/>
        <end position="424"/>
    </location>
</feature>
<feature type="disulfide bond" evidence="2">
    <location>
        <begin position="423"/>
        <end position="446"/>
    </location>
</feature>
<feature type="disulfide bond" evidence="2">
    <location>
        <begin position="437"/>
        <end position="443"/>
    </location>
</feature>
<feature type="disulfide bond" evidence="2">
    <location>
        <begin position="442"/>
        <end position="467"/>
    </location>
</feature>
<feature type="disulfide bond" evidence="2 4">
    <location>
        <begin position="455"/>
        <end position="474"/>
    </location>
</feature>
<feature type="sequence variant" description="In Okinawa habu." evidence="8">
    <original>PEQQ</original>
    <variation>EQRF</variation>
    <location>
        <begin position="189"/>
        <end position="192"/>
    </location>
</feature>
<feature type="sequence variant" description="In 50% of the chains.">
    <location>
        <position position="192"/>
    </location>
</feature>
<feature type="sequence variant" description="In Okinawa habu." evidence="8">
    <original>D</original>
    <variation>N</variation>
    <location>
        <position position="271"/>
    </location>
</feature>
<keyword id="KW-0106">Calcium</keyword>
<keyword id="KW-1217">Cell adhesion impairing toxin</keyword>
<keyword id="KW-0903">Direct protein sequencing</keyword>
<keyword id="KW-1015">Disulfide bond</keyword>
<keyword id="KW-0325">Glycoprotein</keyword>
<keyword id="KW-1200">Hemorrhagic toxin</keyword>
<keyword id="KW-1199">Hemostasis impairing toxin</keyword>
<keyword id="KW-0378">Hydrolase</keyword>
<keyword id="KW-0479">Metal-binding</keyword>
<keyword id="KW-0482">Metalloprotease</keyword>
<keyword id="KW-1201">Platelet aggregation inhibiting toxin</keyword>
<keyword id="KW-0645">Protease</keyword>
<keyword id="KW-0873">Pyrrolidone carboxylic acid</keyword>
<keyword id="KW-0964">Secreted</keyword>
<keyword id="KW-0732">Signal</keyword>
<keyword id="KW-0800">Toxin</keyword>
<keyword id="KW-0862">Zinc</keyword>
<keyword id="KW-0865">Zymogen</keyword>
<evidence type="ECO:0000250" key="1"/>
<evidence type="ECO:0000250" key="2">
    <source>
        <dbReference type="UniProtKB" id="Q0NZX5"/>
    </source>
</evidence>
<evidence type="ECO:0000255" key="3"/>
<evidence type="ECO:0000255" key="4">
    <source>
        <dbReference type="PROSITE-ProRule" id="PRU00068"/>
    </source>
</evidence>
<evidence type="ECO:0000255" key="5">
    <source>
        <dbReference type="PROSITE-ProRule" id="PRU00276"/>
    </source>
</evidence>
<evidence type="ECO:0000256" key="6">
    <source>
        <dbReference type="SAM" id="MobiDB-lite"/>
    </source>
</evidence>
<evidence type="ECO:0000269" key="7">
    <source>
    </source>
</evidence>
<evidence type="ECO:0000269" key="8">
    <source>
    </source>
</evidence>
<evidence type="ECO:0000269" key="9">
    <source>
    </source>
</evidence>
<evidence type="ECO:0000303" key="10">
    <source>
    </source>
</evidence>
<evidence type="ECO:0000303" key="11">
    <source>
    </source>
</evidence>
<evidence type="ECO:0000303" key="12">
    <source>
    </source>
</evidence>
<evidence type="ECO:0000303" key="13">
    <source>
    </source>
</evidence>
<evidence type="ECO:0000305" key="14"/>
<evidence type="ECO:0000305" key="15">
    <source>
    </source>
</evidence>
<evidence type="ECO:0000305" key="16">
    <source>
    </source>
</evidence>
<evidence type="ECO:0000305" key="17">
    <source>
    </source>
</evidence>
<proteinExistence type="evidence at protein level"/>
<comment type="function">
    <molecule>Snake venom metalloproteinase HR2a</molecule>
    <text evidence="9">Zinc protease that induces hemorrhage.</text>
</comment>
<comment type="function">
    <molecule>Disintegrin flavostatin</molecule>
    <text evidence="9">Inhibits platelet aggregation induced by ADP, thrombin, and collagen. Acts by inhibiting fibrinogen interaction with platelet receptors GPIIb/GPIIIa (ITGA2B/ITGB3).</text>
</comment>
<comment type="catalytic activity">
    <reaction>
        <text>Cleavage of 3-Asn-|-Gln-4, 10-His-|-Leu-11 and 14-Ala-|-Leu-15 in the insulin B chain, and the bond Z-Gly-Pro-|-Leu-Gly-Pro in a small molecule substrate of microbial collagenase.</text>
        <dbReference type="EC" id="3.4.24.53"/>
    </reaction>
</comment>
<comment type="cofactor">
    <cofactor evidence="1">
        <name>Zn(2+)</name>
        <dbReference type="ChEBI" id="CHEBI:29105"/>
    </cofactor>
    <text evidence="1">Binds 1 zinc ion per subunit.</text>
</comment>
<comment type="subunit">
    <text evidence="1">Monomer.</text>
</comment>
<comment type="subcellular location">
    <subcellularLocation>
        <location evidence="7 8 9">Secreted</location>
    </subcellularLocation>
</comment>
<comment type="tissue specificity">
    <text evidence="15 16 17">Expressed by the venom gland.</text>
</comment>
<comment type="PTM">
    <text evidence="7">Not N-glycosylated.</text>
</comment>
<comment type="miscellaneous">
    <text>The disintegrin belongs to the medium disintegrin subfamily.</text>
</comment>
<comment type="similarity">
    <text evidence="14">Belongs to the venom metalloproteinase (M12B) family. P-II subfamily. P-IIa sub-subfamily.</text>
</comment>
<reference key="1">
    <citation type="journal article" date="1999" name="FEBS Lett.">
        <title>Nucleotide sequence of a cDNA encoding a common precursor of disintegrin flavostatin and hemorrhagic factor HR2a from the venom of Trimeresurus flavoviridis.</title>
        <authorList>
            <person name="Yamada D."/>
            <person name="Shin Y."/>
            <person name="Morita T."/>
        </authorList>
    </citation>
    <scope>NUCLEOTIDE SEQUENCE [MRNA]</scope>
    <source>
        <tissue>Venom gland</tissue>
    </source>
</reference>
<reference key="2">
    <citation type="journal article" date="1995" name="Toxicon">
        <title>The primary structure of a hemorrhagic factor, HR2b, from the venom of Okinawa habu (Trimeresurus flavoviridis).</title>
        <authorList>
            <person name="Iha M."/>
            <person name="Qi Z.Q."/>
            <person name="Kannki T."/>
            <person name="Tomihara Y."/>
            <person name="Yonaha K."/>
        </authorList>
    </citation>
    <scope>PROTEIN SEQUENCE OF 191-392</scope>
    <scope>DISULFIDE BONDS</scope>
    <scope>PYROGLUTAMATE FORMATION AT GLN-191</scope>
    <scope>VARIANTS OKINAWA HABU 189-PRO--GLN-192 DELINS GLU-GLN-ARG-PHE AND ASN-271</scope>
    <scope>SUBCELLULAR LOCATION</scope>
    <source>
        <strain>Okinawa habu</strain>
        <tissue>Venom</tissue>
    </source>
</reference>
<reference key="3">
    <citation type="journal article" date="1989" name="J. Biochem.">
        <title>Primary structure of hemorrhagic protein, HR2a, isolated from the venom of Trimeresurus flavoviridis.</title>
        <authorList>
            <person name="Miyata T."/>
            <person name="Takeya H."/>
            <person name="Ozeki Y."/>
            <person name="Arakawa M."/>
            <person name="Tokunaga F."/>
            <person name="Iwanaga S."/>
            <person name="Omori-Satoh T."/>
        </authorList>
    </citation>
    <scope>PROTEIN SEQUENCE OF 191-392</scope>
    <scope>DISULFIDE BONDS</scope>
    <scope>PYROGLUTAMATE FORMATION AT GLN-191</scope>
    <scope>ABSENCE OF GLYCOSYLATION</scope>
    <scope>SUBCELLULAR LOCATION</scope>
    <source>
        <strain>Amami habu</strain>
        <tissue>Venom</tissue>
    </source>
</reference>
<reference key="4">
    <citation type="journal article" date="1997" name="Peptides">
        <title>Isolation and amino acid sequence of flavostatin, a novel disintegrin from the venom of Trimeresurus flavoviridis.</title>
        <authorList>
            <person name="Maruyama K."/>
            <person name="Kawasaki T."/>
            <person name="Sakai Y."/>
            <person name="Taniuchi Y."/>
            <person name="Shimizu M."/>
            <person name="Kawashima H."/>
            <person name="Takenaka T."/>
        </authorList>
    </citation>
    <scope>PROTEIN SEQUENCE OF 411-478</scope>
    <scope>FUNCTION OF FLAVOSTATIN</scope>
    <scope>SUBCELLULAR LOCATION</scope>
    <source>
        <tissue>Venom</tissue>
    </source>
</reference>
<dbReference type="EC" id="3.4.24.53"/>
<dbReference type="EMBL" id="AY037808">
    <property type="protein sequence ID" value="AAK68850.1"/>
    <property type="molecule type" value="mRNA"/>
</dbReference>
<dbReference type="PIR" id="JX0074">
    <property type="entry name" value="HYTVH2"/>
</dbReference>
<dbReference type="SMR" id="P14530"/>
<dbReference type="MEROPS" id="M12.156"/>
<dbReference type="GO" id="GO:0005576">
    <property type="term" value="C:extracellular region"/>
    <property type="evidence" value="ECO:0007669"/>
    <property type="project" value="UniProtKB-SubCell"/>
</dbReference>
<dbReference type="GO" id="GO:0005886">
    <property type="term" value="C:plasma membrane"/>
    <property type="evidence" value="ECO:0007669"/>
    <property type="project" value="TreeGrafter"/>
</dbReference>
<dbReference type="GO" id="GO:0046872">
    <property type="term" value="F:metal ion binding"/>
    <property type="evidence" value="ECO:0007669"/>
    <property type="project" value="UniProtKB-KW"/>
</dbReference>
<dbReference type="GO" id="GO:0004222">
    <property type="term" value="F:metalloendopeptidase activity"/>
    <property type="evidence" value="ECO:0007669"/>
    <property type="project" value="InterPro"/>
</dbReference>
<dbReference type="GO" id="GO:0090729">
    <property type="term" value="F:toxin activity"/>
    <property type="evidence" value="ECO:0007669"/>
    <property type="project" value="UniProtKB-KW"/>
</dbReference>
<dbReference type="GO" id="GO:0006508">
    <property type="term" value="P:proteolysis"/>
    <property type="evidence" value="ECO:0007669"/>
    <property type="project" value="UniProtKB-KW"/>
</dbReference>
<dbReference type="CDD" id="cd04269">
    <property type="entry name" value="ZnMc_adamalysin_II_like"/>
    <property type="match status" value="1"/>
</dbReference>
<dbReference type="FunFam" id="3.40.390.10:FF:000002">
    <property type="entry name" value="Disintegrin and metalloproteinase domain-containing protein 22"/>
    <property type="match status" value="1"/>
</dbReference>
<dbReference type="FunFam" id="4.10.70.10:FF:000005">
    <property type="entry name" value="Zinc metalloproteinase/disintegrin"/>
    <property type="match status" value="1"/>
</dbReference>
<dbReference type="Gene3D" id="3.40.390.10">
    <property type="entry name" value="Collagenase (Catalytic Domain)"/>
    <property type="match status" value="1"/>
</dbReference>
<dbReference type="Gene3D" id="4.10.70.10">
    <property type="entry name" value="Disintegrin domain"/>
    <property type="match status" value="1"/>
</dbReference>
<dbReference type="InterPro" id="IPR018358">
    <property type="entry name" value="Disintegrin_CS"/>
</dbReference>
<dbReference type="InterPro" id="IPR001762">
    <property type="entry name" value="Disintegrin_dom"/>
</dbReference>
<dbReference type="InterPro" id="IPR036436">
    <property type="entry name" value="Disintegrin_dom_sf"/>
</dbReference>
<dbReference type="InterPro" id="IPR024079">
    <property type="entry name" value="MetalloPept_cat_dom_sf"/>
</dbReference>
<dbReference type="InterPro" id="IPR001590">
    <property type="entry name" value="Peptidase_M12B"/>
</dbReference>
<dbReference type="InterPro" id="IPR002870">
    <property type="entry name" value="Peptidase_M12B_N"/>
</dbReference>
<dbReference type="InterPro" id="IPR034027">
    <property type="entry name" value="Reprolysin_adamalysin"/>
</dbReference>
<dbReference type="PANTHER" id="PTHR11905">
    <property type="entry name" value="ADAM A DISINTEGRIN AND METALLOPROTEASE DOMAIN"/>
    <property type="match status" value="1"/>
</dbReference>
<dbReference type="PANTHER" id="PTHR11905:SF32">
    <property type="entry name" value="DISINTEGRIN AND METALLOPROTEINASE DOMAIN-CONTAINING PROTEIN 28"/>
    <property type="match status" value="1"/>
</dbReference>
<dbReference type="Pfam" id="PF00200">
    <property type="entry name" value="Disintegrin"/>
    <property type="match status" value="1"/>
</dbReference>
<dbReference type="Pfam" id="PF01562">
    <property type="entry name" value="Pep_M12B_propep"/>
    <property type="match status" value="1"/>
</dbReference>
<dbReference type="Pfam" id="PF01421">
    <property type="entry name" value="Reprolysin"/>
    <property type="match status" value="1"/>
</dbReference>
<dbReference type="PRINTS" id="PR00289">
    <property type="entry name" value="DISINTEGRIN"/>
</dbReference>
<dbReference type="SMART" id="SM00050">
    <property type="entry name" value="DISIN"/>
    <property type="match status" value="1"/>
</dbReference>
<dbReference type="SUPFAM" id="SSF57552">
    <property type="entry name" value="Blood coagulation inhibitor (disintegrin)"/>
    <property type="match status" value="1"/>
</dbReference>
<dbReference type="SUPFAM" id="SSF55486">
    <property type="entry name" value="Metalloproteases ('zincins'), catalytic domain"/>
    <property type="match status" value="1"/>
</dbReference>
<dbReference type="PROSITE" id="PS50215">
    <property type="entry name" value="ADAM_MEPRO"/>
    <property type="match status" value="1"/>
</dbReference>
<dbReference type="PROSITE" id="PS00427">
    <property type="entry name" value="DISINTEGRIN_1"/>
    <property type="match status" value="1"/>
</dbReference>
<dbReference type="PROSITE" id="PS50214">
    <property type="entry name" value="DISINTEGRIN_2"/>
    <property type="match status" value="1"/>
</dbReference>
<dbReference type="PROSITE" id="PS00142">
    <property type="entry name" value="ZINC_PROTEASE"/>
    <property type="match status" value="1"/>
</dbReference>
<protein>
    <recommendedName>
        <fullName>Zinc metalloproteinase/disintegrin</fullName>
    </recommendedName>
    <component>
        <recommendedName>
            <fullName evidence="10 11">Snake venom metalloproteinase HR2a</fullName>
            <shortName>SVMP</shortName>
            <ecNumber>3.4.24.53</ecNumber>
        </recommendedName>
        <alternativeName>
            <fullName evidence="12">Snake venom metalloproteinase HR2b</fullName>
        </alternativeName>
        <alternativeName>
            <fullName>Trimerelysin II</fullName>
        </alternativeName>
    </component>
    <component>
        <recommendedName>
            <fullName evidence="10 13">Disintegrin flavostatin</fullName>
        </recommendedName>
        <alternativeName>
            <fullName>Platelet aggregation activation inhibitor</fullName>
        </alternativeName>
    </component>
</protein>
<sequence>MIEVLLVTICLAVFPYPGSSIILESGNVDDYEVVYPQKLTALPKGAVQPKYEDAMQYEFKVNGEPVVLHLEKNKGLFSEDYSETHYSPDGREITTYPSVEDHCYYHGRIQNDADSTASISACDGLKGYFKLQGETYLIEPLELSDSEAHAVFKYENVEKEDEAPKMCGVTQNWESDESIKKASQLYLTPEQQRFPQRYIELAIVVDHGMYTKYSSNFKKIRKRVHQMVNNINEMYRPLNIAITLSLLDVWSEKDLITMQAVAPTTARLFGDWRETVLLKQKDHDHAQLLTDINFTGNTIGWAYMGGMCNAKNSVGIVKDHSSNVFMVAVTMTHEIGHNLGMEHDDKDKCKCEACIMSAVISDKPSKLFSDCSKDYYQTFLTNSKPQCIINAPLRTDTVSTPVSGNEFLEAGEECDCGSPSNPCCDAATCKLRPGAQCADGLCCDQCRFKKKRTICRRARGDNPDDRCTGQSADCPRNS</sequence>